<protein>
    <recommendedName>
        <fullName evidence="1">Phosphoribosylformylglycinamidine synthase</fullName>
        <shortName evidence="1">FGAM synthase</shortName>
        <shortName evidence="1">FGAMS</shortName>
        <ecNumber evidence="1">6.3.5.3</ecNumber>
    </recommendedName>
    <alternativeName>
        <fullName evidence="1">Formylglycinamide ribonucleotide amidotransferase</fullName>
        <shortName evidence="1">FGAR amidotransferase</shortName>
        <shortName evidence="1">FGAR-AT</shortName>
    </alternativeName>
</protein>
<comment type="function">
    <text evidence="1">Phosphoribosylformylglycinamidine synthase involved in the purines biosynthetic pathway. Catalyzes the ATP-dependent conversion of formylglycinamide ribonucleotide (FGAR) and glutamine to yield formylglycinamidine ribonucleotide (FGAM) and glutamate.</text>
</comment>
<comment type="catalytic activity">
    <reaction evidence="1">
        <text>N(2)-formyl-N(1)-(5-phospho-beta-D-ribosyl)glycinamide + L-glutamine + ATP + H2O = 2-formamido-N(1)-(5-O-phospho-beta-D-ribosyl)acetamidine + L-glutamate + ADP + phosphate + H(+)</text>
        <dbReference type="Rhea" id="RHEA:17129"/>
        <dbReference type="ChEBI" id="CHEBI:15377"/>
        <dbReference type="ChEBI" id="CHEBI:15378"/>
        <dbReference type="ChEBI" id="CHEBI:29985"/>
        <dbReference type="ChEBI" id="CHEBI:30616"/>
        <dbReference type="ChEBI" id="CHEBI:43474"/>
        <dbReference type="ChEBI" id="CHEBI:58359"/>
        <dbReference type="ChEBI" id="CHEBI:147286"/>
        <dbReference type="ChEBI" id="CHEBI:147287"/>
        <dbReference type="ChEBI" id="CHEBI:456216"/>
        <dbReference type="EC" id="6.3.5.3"/>
    </reaction>
</comment>
<comment type="pathway">
    <text evidence="1">Purine metabolism; IMP biosynthesis via de novo pathway; 5-amino-1-(5-phospho-D-ribosyl)imidazole from N(2)-formyl-N(1)-(5-phospho-D-ribosyl)glycinamide: step 1/2.</text>
</comment>
<comment type="subunit">
    <text evidence="1">Monomer.</text>
</comment>
<comment type="subcellular location">
    <subcellularLocation>
        <location evidence="1">Cytoplasm</location>
    </subcellularLocation>
</comment>
<comment type="similarity">
    <text evidence="1">In the N-terminal section; belongs to the FGAMS family.</text>
</comment>
<keyword id="KW-0067">ATP-binding</keyword>
<keyword id="KW-0963">Cytoplasm</keyword>
<keyword id="KW-0315">Glutamine amidotransferase</keyword>
<keyword id="KW-0436">Ligase</keyword>
<keyword id="KW-0460">Magnesium</keyword>
<keyword id="KW-0479">Metal-binding</keyword>
<keyword id="KW-0547">Nucleotide-binding</keyword>
<keyword id="KW-0658">Purine biosynthesis</keyword>
<gene>
    <name evidence="1" type="primary">purL</name>
    <name type="ordered locus">HS_1503</name>
</gene>
<evidence type="ECO:0000255" key="1">
    <source>
        <dbReference type="HAMAP-Rule" id="MF_00419"/>
    </source>
</evidence>
<evidence type="ECO:0000256" key="2">
    <source>
        <dbReference type="SAM" id="MobiDB-lite"/>
    </source>
</evidence>
<reference key="1">
    <citation type="journal article" date="2007" name="J. Bacteriol.">
        <title>Complete genome sequence of Haemophilus somnus (Histophilus somni) strain 129Pt and comparison to Haemophilus ducreyi 35000HP and Haemophilus influenzae Rd.</title>
        <authorList>
            <person name="Challacombe J.F."/>
            <person name="Duncan A.J."/>
            <person name="Brettin T.S."/>
            <person name="Bruce D."/>
            <person name="Chertkov O."/>
            <person name="Detter J.C."/>
            <person name="Han C.S."/>
            <person name="Misra M."/>
            <person name="Richardson P."/>
            <person name="Tapia R."/>
            <person name="Thayer N."/>
            <person name="Xie G."/>
            <person name="Inzana T.J."/>
        </authorList>
    </citation>
    <scope>NUCLEOTIDE SEQUENCE [LARGE SCALE GENOMIC DNA]</scope>
    <source>
        <strain>129Pt</strain>
    </source>
</reference>
<feature type="chain" id="PRO_0000264576" description="Phosphoribosylformylglycinamidine synthase">
    <location>
        <begin position="1"/>
        <end position="1297"/>
    </location>
</feature>
<feature type="domain" description="Glutamine amidotransferase type-1" evidence="1">
    <location>
        <begin position="1043"/>
        <end position="1297"/>
    </location>
</feature>
<feature type="region of interest" description="Disordered" evidence="2">
    <location>
        <begin position="304"/>
        <end position="323"/>
    </location>
</feature>
<feature type="active site" description="Nucleophile" evidence="1">
    <location>
        <position position="1137"/>
    </location>
</feature>
<feature type="active site" evidence="1">
    <location>
        <position position="1262"/>
    </location>
</feature>
<feature type="active site" evidence="1">
    <location>
        <position position="1264"/>
    </location>
</feature>
<feature type="binding site" evidence="1">
    <location>
        <begin position="307"/>
        <end position="318"/>
    </location>
    <ligand>
        <name>ATP</name>
        <dbReference type="ChEBI" id="CHEBI:30616"/>
    </ligand>
</feature>
<feature type="binding site" evidence="1">
    <location>
        <position position="678"/>
    </location>
    <ligand>
        <name>ATP</name>
        <dbReference type="ChEBI" id="CHEBI:30616"/>
    </ligand>
</feature>
<feature type="binding site" evidence="1">
    <location>
        <position position="679"/>
    </location>
    <ligand>
        <name>Mg(2+)</name>
        <dbReference type="ChEBI" id="CHEBI:18420"/>
    </ligand>
</feature>
<feature type="binding site" evidence="1">
    <location>
        <position position="718"/>
    </location>
    <ligand>
        <name>Mg(2+)</name>
        <dbReference type="ChEBI" id="CHEBI:18420"/>
    </ligand>
</feature>
<feature type="binding site" evidence="1">
    <location>
        <position position="722"/>
    </location>
    <ligand>
        <name>Mg(2+)</name>
        <dbReference type="ChEBI" id="CHEBI:18420"/>
    </ligand>
</feature>
<feature type="binding site" evidence="1">
    <location>
        <position position="886"/>
    </location>
    <ligand>
        <name>Mg(2+)</name>
        <dbReference type="ChEBI" id="CHEBI:18420"/>
    </ligand>
</feature>
<feature type="binding site" evidence="1">
    <location>
        <position position="888"/>
    </location>
    <ligand>
        <name>ATP</name>
        <dbReference type="ChEBI" id="CHEBI:30616"/>
    </ligand>
</feature>
<name>PUR4_HISS1</name>
<proteinExistence type="inferred from homology"/>
<organism>
    <name type="scientific">Histophilus somni (strain 129Pt)</name>
    <name type="common">Haemophilus somnus</name>
    <dbReference type="NCBI Taxonomy" id="205914"/>
    <lineage>
        <taxon>Bacteria</taxon>
        <taxon>Pseudomonadati</taxon>
        <taxon>Pseudomonadota</taxon>
        <taxon>Gammaproteobacteria</taxon>
        <taxon>Pasteurellales</taxon>
        <taxon>Pasteurellaceae</taxon>
        <taxon>Histophilus</taxon>
    </lineage>
</organism>
<sequence length="1297" mass="143158">MLHIFRGTPALSNFRLNQLFSGFQQDNLPIVSCYAEFLHFAHLSEALTEIEREKLEELLRYGPTQKSQEPYGECFVVIPRIGTISSWASKATDIAHNCDLNKVLRLERGIAYYFKFNRTLTAEEEQQLVFRIYDPMMESIVRSPQEAAVLFEQHDPKPFTTVDILTGGHVALEKANVTLGLALAKDEIDYLVENFTALGRNPTDVELYMFAQANSEHCRHKIFNADWIIDGKKQDKSLFKMIKNTFEKTPDYVLSAYKDNAAVMEGSKVGRFFPDQDGQYRYHQEDTHILMKVETHNHPTAISPFPGAATGSGGEIRDEGATGRGAKPKAGLVGFSVSNLCIPNFPQPWENALSKPSRIASALDIMIEGPLGGAAFNNEFGRPALLGYFRTYEEKVNSFNGEEVRGYHKPIMLAGGIGNIRHEHVQKGEIPVGAKLIVLGGAAMNIGLGGGAASSMASGKSKEDLDFASVQRDNPEMERRCQEVIDRCWQLGSENPILFIHDVGAGGLSNAMPELVHDGGRGGRFELRKILCDEKGMSPLEIWCNESQERYVLAVSPEKLPLFEAICQRERASFAVIGEATEQQQLTLQDSHFNNNPIDLPMNILLGKTPKMIRDVKSAKVNNPQLDQSMIQIKEALFRVLRLPAVAEKTFLITIGDRSVTGMVARDQMVGPWQVPVADCAVTTASLDSYHGEAMSIGERTPVALLDFAASARLAVAESITNIAATDIGDIRRIKLSANWMAAAGHGGEDAGLYEAVKAIGEELCPQLGLTIPVGKDSMSMKTTWQEEGYQKSVTAPLSVIISAFARVEDVRKTVTPQLRMDKGDSRLLLIDLGEGKNRLGATALAQVYKQLGDVPADVVNVSLLKGFFNAMQALVKQEKLLAYHDRSDGGLIVTLAEMAFAGHCGISIDISALGDNDLGVLFNEELGAVIQVKESDLKAVRAVLTEHGLIHLTKELGIVTADDHIEITRSTRVLLSEKRSVLRGIWAELTHQMQRLRDNPDCADQEFEMKKDPNDKGLSAYLTYDLNEKITAPYIQKGTKPRIAILREQGVNSHYEMAAAFDRAGFNAIDVHMSDLQKGRHHLQDFNALVACGGFSYGDVLGAGGGWAKSILFNTALRDQFSAFFHRQDTLALGVCNGCQMLSNLAEIIPGTENWGRFVRNKSERFEARVAMVRINNTHSVWFDGMAGSHMPIAVSHGEGRIEFKHDQQLQALKAQNLIAAQYIDSQLNPTEIYPANPNGSAEGITALSNSNGRVAIMMPHPERVFRAVNNSWYPENWQEDGAWMRLFQNARVALG</sequence>
<dbReference type="EC" id="6.3.5.3" evidence="1"/>
<dbReference type="EMBL" id="CP000436">
    <property type="protein sequence ID" value="ABI25776.1"/>
    <property type="molecule type" value="Genomic_DNA"/>
</dbReference>
<dbReference type="SMR" id="Q0I5H4"/>
<dbReference type="KEGG" id="hso:HS_1503"/>
<dbReference type="eggNOG" id="COG0046">
    <property type="taxonomic scope" value="Bacteria"/>
</dbReference>
<dbReference type="eggNOG" id="COG0047">
    <property type="taxonomic scope" value="Bacteria"/>
</dbReference>
<dbReference type="HOGENOM" id="CLU_001031_0_2_6"/>
<dbReference type="UniPathway" id="UPA00074">
    <property type="reaction ID" value="UER00128"/>
</dbReference>
<dbReference type="GO" id="GO:0005737">
    <property type="term" value="C:cytoplasm"/>
    <property type="evidence" value="ECO:0007669"/>
    <property type="project" value="UniProtKB-SubCell"/>
</dbReference>
<dbReference type="GO" id="GO:0005524">
    <property type="term" value="F:ATP binding"/>
    <property type="evidence" value="ECO:0007669"/>
    <property type="project" value="UniProtKB-UniRule"/>
</dbReference>
<dbReference type="GO" id="GO:0046872">
    <property type="term" value="F:metal ion binding"/>
    <property type="evidence" value="ECO:0007669"/>
    <property type="project" value="UniProtKB-KW"/>
</dbReference>
<dbReference type="GO" id="GO:0004642">
    <property type="term" value="F:phosphoribosylformylglycinamidine synthase activity"/>
    <property type="evidence" value="ECO:0007669"/>
    <property type="project" value="UniProtKB-UniRule"/>
</dbReference>
<dbReference type="GO" id="GO:0006189">
    <property type="term" value="P:'de novo' IMP biosynthetic process"/>
    <property type="evidence" value="ECO:0007669"/>
    <property type="project" value="UniProtKB-UniRule"/>
</dbReference>
<dbReference type="CDD" id="cd01740">
    <property type="entry name" value="GATase1_FGAR_AT"/>
    <property type="match status" value="1"/>
</dbReference>
<dbReference type="CDD" id="cd02203">
    <property type="entry name" value="PurL_repeat1"/>
    <property type="match status" value="1"/>
</dbReference>
<dbReference type="CDD" id="cd02204">
    <property type="entry name" value="PurL_repeat2"/>
    <property type="match status" value="1"/>
</dbReference>
<dbReference type="FunFam" id="1.10.8.750:FF:000002">
    <property type="entry name" value="Phosphoribosylformylglycinamidine synthase"/>
    <property type="match status" value="1"/>
</dbReference>
<dbReference type="FunFam" id="3.30.1330.10:FF:000002">
    <property type="entry name" value="Phosphoribosylformylglycinamidine synthase"/>
    <property type="match status" value="1"/>
</dbReference>
<dbReference type="FunFam" id="3.30.1330.10:FF:000005">
    <property type="entry name" value="Phosphoribosylformylglycinamidine synthase"/>
    <property type="match status" value="1"/>
</dbReference>
<dbReference type="FunFam" id="3.40.50.880:FF:000008">
    <property type="entry name" value="Phosphoribosylformylglycinamidine synthase"/>
    <property type="match status" value="1"/>
</dbReference>
<dbReference type="FunFam" id="3.90.650.10:FF:000002">
    <property type="entry name" value="Phosphoribosylformylglycinamidine synthase"/>
    <property type="match status" value="1"/>
</dbReference>
<dbReference type="FunFam" id="3.90.650.10:FF:000005">
    <property type="entry name" value="Phosphoribosylformylglycinamidine synthase"/>
    <property type="match status" value="1"/>
</dbReference>
<dbReference type="Gene3D" id="3.40.50.880">
    <property type="match status" value="1"/>
</dbReference>
<dbReference type="Gene3D" id="1.10.8.750">
    <property type="entry name" value="Phosphoribosylformylglycinamidine synthase, linker domain"/>
    <property type="match status" value="1"/>
</dbReference>
<dbReference type="Gene3D" id="3.90.650.10">
    <property type="entry name" value="PurM-like C-terminal domain"/>
    <property type="match status" value="2"/>
</dbReference>
<dbReference type="Gene3D" id="3.30.1330.10">
    <property type="entry name" value="PurM-like, N-terminal domain"/>
    <property type="match status" value="2"/>
</dbReference>
<dbReference type="HAMAP" id="MF_00419">
    <property type="entry name" value="PurL_1"/>
    <property type="match status" value="1"/>
</dbReference>
<dbReference type="InterPro" id="IPR029062">
    <property type="entry name" value="Class_I_gatase-like"/>
</dbReference>
<dbReference type="InterPro" id="IPR040707">
    <property type="entry name" value="FGAR-AT_N"/>
</dbReference>
<dbReference type="InterPro" id="IPR055181">
    <property type="entry name" value="FGAR-AT_PurM_N-like"/>
</dbReference>
<dbReference type="InterPro" id="IPR010073">
    <property type="entry name" value="PurL_large"/>
</dbReference>
<dbReference type="InterPro" id="IPR041609">
    <property type="entry name" value="PurL_linker"/>
</dbReference>
<dbReference type="InterPro" id="IPR010918">
    <property type="entry name" value="PurM-like_C_dom"/>
</dbReference>
<dbReference type="InterPro" id="IPR036676">
    <property type="entry name" value="PurM-like_C_sf"/>
</dbReference>
<dbReference type="InterPro" id="IPR036921">
    <property type="entry name" value="PurM-like_N_sf"/>
</dbReference>
<dbReference type="InterPro" id="IPR036604">
    <property type="entry name" value="PurS-like_sf"/>
</dbReference>
<dbReference type="NCBIfam" id="TIGR01735">
    <property type="entry name" value="FGAM_synt"/>
    <property type="match status" value="1"/>
</dbReference>
<dbReference type="NCBIfam" id="NF003672">
    <property type="entry name" value="PRK05297.1"/>
    <property type="match status" value="1"/>
</dbReference>
<dbReference type="PANTHER" id="PTHR10099">
    <property type="entry name" value="PHOSPHORIBOSYLFORMYLGLYCINAMIDINE SYNTHASE"/>
    <property type="match status" value="1"/>
</dbReference>
<dbReference type="PANTHER" id="PTHR10099:SF1">
    <property type="entry name" value="PHOSPHORIBOSYLFORMYLGLYCINAMIDINE SYNTHASE"/>
    <property type="match status" value="1"/>
</dbReference>
<dbReference type="Pfam" id="PF02769">
    <property type="entry name" value="AIRS_C"/>
    <property type="match status" value="2"/>
</dbReference>
<dbReference type="Pfam" id="PF18072">
    <property type="entry name" value="FGAR-AT_linker"/>
    <property type="match status" value="1"/>
</dbReference>
<dbReference type="Pfam" id="PF18076">
    <property type="entry name" value="FGAR-AT_N"/>
    <property type="match status" value="1"/>
</dbReference>
<dbReference type="Pfam" id="PF22689">
    <property type="entry name" value="FGAR-AT_PurM_N-like"/>
    <property type="match status" value="1"/>
</dbReference>
<dbReference type="Pfam" id="PF13507">
    <property type="entry name" value="GATase_5"/>
    <property type="match status" value="1"/>
</dbReference>
<dbReference type="SMART" id="SM01211">
    <property type="entry name" value="GATase_5"/>
    <property type="match status" value="1"/>
</dbReference>
<dbReference type="SUPFAM" id="SSF52317">
    <property type="entry name" value="Class I glutamine amidotransferase-like"/>
    <property type="match status" value="1"/>
</dbReference>
<dbReference type="SUPFAM" id="SSF109736">
    <property type="entry name" value="FGAM synthase PurL, linker domain"/>
    <property type="match status" value="1"/>
</dbReference>
<dbReference type="SUPFAM" id="SSF56042">
    <property type="entry name" value="PurM C-terminal domain-like"/>
    <property type="match status" value="2"/>
</dbReference>
<dbReference type="SUPFAM" id="SSF55326">
    <property type="entry name" value="PurM N-terminal domain-like"/>
    <property type="match status" value="2"/>
</dbReference>
<dbReference type="SUPFAM" id="SSF82697">
    <property type="entry name" value="PurS-like"/>
    <property type="match status" value="1"/>
</dbReference>
<dbReference type="PROSITE" id="PS51273">
    <property type="entry name" value="GATASE_TYPE_1"/>
    <property type="match status" value="1"/>
</dbReference>
<accession>Q0I5H4</accession>